<gene>
    <name evidence="1" type="primary">nanK</name>
    <name type="ordered locus">ECIAI39_3711</name>
</gene>
<accession>B7NKT3</accession>
<reference key="1">
    <citation type="journal article" date="2009" name="PLoS Genet.">
        <title>Organised genome dynamics in the Escherichia coli species results in highly diverse adaptive paths.</title>
        <authorList>
            <person name="Touchon M."/>
            <person name="Hoede C."/>
            <person name="Tenaillon O."/>
            <person name="Barbe V."/>
            <person name="Baeriswyl S."/>
            <person name="Bidet P."/>
            <person name="Bingen E."/>
            <person name="Bonacorsi S."/>
            <person name="Bouchier C."/>
            <person name="Bouvet O."/>
            <person name="Calteau A."/>
            <person name="Chiapello H."/>
            <person name="Clermont O."/>
            <person name="Cruveiller S."/>
            <person name="Danchin A."/>
            <person name="Diard M."/>
            <person name="Dossat C."/>
            <person name="Karoui M.E."/>
            <person name="Frapy E."/>
            <person name="Garry L."/>
            <person name="Ghigo J.M."/>
            <person name="Gilles A.M."/>
            <person name="Johnson J."/>
            <person name="Le Bouguenec C."/>
            <person name="Lescat M."/>
            <person name="Mangenot S."/>
            <person name="Martinez-Jehanne V."/>
            <person name="Matic I."/>
            <person name="Nassif X."/>
            <person name="Oztas S."/>
            <person name="Petit M.A."/>
            <person name="Pichon C."/>
            <person name="Rouy Z."/>
            <person name="Ruf C.S."/>
            <person name="Schneider D."/>
            <person name="Tourret J."/>
            <person name="Vacherie B."/>
            <person name="Vallenet D."/>
            <person name="Medigue C."/>
            <person name="Rocha E.P.C."/>
            <person name="Denamur E."/>
        </authorList>
    </citation>
    <scope>NUCLEOTIDE SEQUENCE [LARGE SCALE GENOMIC DNA]</scope>
    <source>
        <strain>IAI39 / ExPEC</strain>
    </source>
</reference>
<comment type="function">
    <text evidence="1">Catalyzes the phosphorylation of N-acetylmannosamine (ManNAc) to ManNAc-6-P.</text>
</comment>
<comment type="catalytic activity">
    <reaction evidence="1">
        <text>an N-acyl-D-mannosamine + ATP = an N-acyl-D-mannosamine 6-phosphate + ADP + H(+)</text>
        <dbReference type="Rhea" id="RHEA:23832"/>
        <dbReference type="ChEBI" id="CHEBI:15378"/>
        <dbReference type="ChEBI" id="CHEBI:16062"/>
        <dbReference type="ChEBI" id="CHEBI:30616"/>
        <dbReference type="ChEBI" id="CHEBI:57666"/>
        <dbReference type="ChEBI" id="CHEBI:456216"/>
        <dbReference type="EC" id="2.7.1.60"/>
    </reaction>
</comment>
<comment type="pathway">
    <text evidence="1">Amino-sugar metabolism; N-acetylneuraminate degradation; D-fructose 6-phosphate from N-acetylneuraminate: step 2/5.</text>
</comment>
<comment type="subunit">
    <text evidence="1">Homodimer.</text>
</comment>
<comment type="similarity">
    <text evidence="1">Belongs to the ROK (NagC/XylR) family. NanK subfamily.</text>
</comment>
<proteinExistence type="inferred from homology"/>
<sequence>MTTLAIDIGGTKLAAALIGADGQIRDRRELPTPASQTPEALRDALSALVSPLQVHAQRVAIASTGIIRDGSLLALNPHNLGGLLHFPLVKTLEQLTDLPTIAINDAQAAAWAEYQALEGDITEMVFITVSTGVGGGVVSGGKLLTGPGGLAGHIGHTLADPHGPVCGCGRTGCVEAIASGRGIAAAAQGELAGANAKTIFTHAGQGDEQAQQLIHRSARTLARLIADIKATTDCQCVVVGGSVGLAEGYLALVETYLAQEPAAFHVDLLAAHYRHDAGLLGAALLALGEKL</sequence>
<protein>
    <recommendedName>
        <fullName evidence="1">N-acetylmannosamine kinase</fullName>
        <ecNumber evidence="1">2.7.1.60</ecNumber>
    </recommendedName>
    <alternativeName>
        <fullName evidence="1">ManNAc kinase</fullName>
    </alternativeName>
    <alternativeName>
        <fullName evidence="1">N-acetyl-D-mannosamine kinase</fullName>
    </alternativeName>
</protein>
<feature type="chain" id="PRO_1000139683" description="N-acetylmannosamine kinase">
    <location>
        <begin position="1"/>
        <end position="291"/>
    </location>
</feature>
<feature type="binding site" evidence="1">
    <location>
        <begin position="5"/>
        <end position="12"/>
    </location>
    <ligand>
        <name>ATP</name>
        <dbReference type="ChEBI" id="CHEBI:30616"/>
    </ligand>
</feature>
<feature type="binding site" evidence="1">
    <location>
        <begin position="132"/>
        <end position="139"/>
    </location>
    <ligand>
        <name>ATP</name>
        <dbReference type="ChEBI" id="CHEBI:30616"/>
    </ligand>
</feature>
<feature type="binding site" evidence="1">
    <location>
        <position position="156"/>
    </location>
    <ligand>
        <name>Zn(2+)</name>
        <dbReference type="ChEBI" id="CHEBI:29105"/>
    </ligand>
</feature>
<feature type="binding site" evidence="1">
    <location>
        <position position="166"/>
    </location>
    <ligand>
        <name>Zn(2+)</name>
        <dbReference type="ChEBI" id="CHEBI:29105"/>
    </ligand>
</feature>
<feature type="binding site" evidence="1">
    <location>
        <position position="168"/>
    </location>
    <ligand>
        <name>Zn(2+)</name>
        <dbReference type="ChEBI" id="CHEBI:29105"/>
    </ligand>
</feature>
<feature type="binding site" evidence="1">
    <location>
        <position position="173"/>
    </location>
    <ligand>
        <name>Zn(2+)</name>
        <dbReference type="ChEBI" id="CHEBI:29105"/>
    </ligand>
</feature>
<name>NANK_ECO7I</name>
<evidence type="ECO:0000255" key="1">
    <source>
        <dbReference type="HAMAP-Rule" id="MF_01234"/>
    </source>
</evidence>
<keyword id="KW-0067">ATP-binding</keyword>
<keyword id="KW-0119">Carbohydrate metabolism</keyword>
<keyword id="KW-0418">Kinase</keyword>
<keyword id="KW-0479">Metal-binding</keyword>
<keyword id="KW-0547">Nucleotide-binding</keyword>
<keyword id="KW-0808">Transferase</keyword>
<keyword id="KW-0862">Zinc</keyword>
<dbReference type="EC" id="2.7.1.60" evidence="1"/>
<dbReference type="EMBL" id="CU928164">
    <property type="protein sequence ID" value="CAR19827.1"/>
    <property type="molecule type" value="Genomic_DNA"/>
</dbReference>
<dbReference type="RefSeq" id="WP_000209035.1">
    <property type="nucleotide sequence ID" value="NC_011750.1"/>
</dbReference>
<dbReference type="RefSeq" id="YP_002409614.1">
    <property type="nucleotide sequence ID" value="NC_011750.1"/>
</dbReference>
<dbReference type="SMR" id="B7NKT3"/>
<dbReference type="STRING" id="585057.ECIAI39_3711"/>
<dbReference type="KEGG" id="ect:ECIAI39_3711"/>
<dbReference type="PATRIC" id="fig|585057.6.peg.3846"/>
<dbReference type="HOGENOM" id="CLU_036604_0_4_6"/>
<dbReference type="UniPathway" id="UPA00629">
    <property type="reaction ID" value="UER00681"/>
</dbReference>
<dbReference type="Proteomes" id="UP000000749">
    <property type="component" value="Chromosome"/>
</dbReference>
<dbReference type="GO" id="GO:0005524">
    <property type="term" value="F:ATP binding"/>
    <property type="evidence" value="ECO:0007669"/>
    <property type="project" value="UniProtKB-UniRule"/>
</dbReference>
<dbReference type="GO" id="GO:0009384">
    <property type="term" value="F:N-acylmannosamine kinase activity"/>
    <property type="evidence" value="ECO:0007669"/>
    <property type="project" value="UniProtKB-UniRule"/>
</dbReference>
<dbReference type="GO" id="GO:0008270">
    <property type="term" value="F:zinc ion binding"/>
    <property type="evidence" value="ECO:0007669"/>
    <property type="project" value="UniProtKB-UniRule"/>
</dbReference>
<dbReference type="GO" id="GO:0019262">
    <property type="term" value="P:N-acetylneuraminate catabolic process"/>
    <property type="evidence" value="ECO:0007669"/>
    <property type="project" value="UniProtKB-UniRule"/>
</dbReference>
<dbReference type="CDD" id="cd24069">
    <property type="entry name" value="ASKHA_NBD_ROK_EcNanK-like"/>
    <property type="match status" value="1"/>
</dbReference>
<dbReference type="FunFam" id="3.30.420.40:FF:000062">
    <property type="entry name" value="N-acetylmannosamine kinase"/>
    <property type="match status" value="1"/>
</dbReference>
<dbReference type="FunFam" id="3.30.420.40:FF:000063">
    <property type="entry name" value="N-acetylmannosamine kinase"/>
    <property type="match status" value="1"/>
</dbReference>
<dbReference type="Gene3D" id="3.30.420.40">
    <property type="match status" value="2"/>
</dbReference>
<dbReference type="HAMAP" id="MF_01234">
    <property type="entry name" value="ManNAc_kinase"/>
    <property type="match status" value="1"/>
</dbReference>
<dbReference type="InterPro" id="IPR043129">
    <property type="entry name" value="ATPase_NBD"/>
</dbReference>
<dbReference type="InterPro" id="IPR023945">
    <property type="entry name" value="ManNAc_kinase_bac"/>
</dbReference>
<dbReference type="InterPro" id="IPR000600">
    <property type="entry name" value="ROK"/>
</dbReference>
<dbReference type="InterPro" id="IPR049874">
    <property type="entry name" value="ROK_cs"/>
</dbReference>
<dbReference type="NCBIfam" id="NF047821">
    <property type="entry name" value="NactlManKinNanK"/>
    <property type="match status" value="1"/>
</dbReference>
<dbReference type="NCBIfam" id="NF003461">
    <property type="entry name" value="PRK05082.1"/>
    <property type="match status" value="1"/>
</dbReference>
<dbReference type="PANTHER" id="PTHR18964:SF169">
    <property type="entry name" value="N-ACETYLMANNOSAMINE KINASE"/>
    <property type="match status" value="1"/>
</dbReference>
<dbReference type="PANTHER" id="PTHR18964">
    <property type="entry name" value="ROK (REPRESSOR, ORF, KINASE) FAMILY"/>
    <property type="match status" value="1"/>
</dbReference>
<dbReference type="Pfam" id="PF00480">
    <property type="entry name" value="ROK"/>
    <property type="match status" value="1"/>
</dbReference>
<dbReference type="SUPFAM" id="SSF53067">
    <property type="entry name" value="Actin-like ATPase domain"/>
    <property type="match status" value="1"/>
</dbReference>
<dbReference type="PROSITE" id="PS01125">
    <property type="entry name" value="ROK"/>
    <property type="match status" value="1"/>
</dbReference>
<organism>
    <name type="scientific">Escherichia coli O7:K1 (strain IAI39 / ExPEC)</name>
    <dbReference type="NCBI Taxonomy" id="585057"/>
    <lineage>
        <taxon>Bacteria</taxon>
        <taxon>Pseudomonadati</taxon>
        <taxon>Pseudomonadota</taxon>
        <taxon>Gammaproteobacteria</taxon>
        <taxon>Enterobacterales</taxon>
        <taxon>Enterobacteriaceae</taxon>
        <taxon>Escherichia</taxon>
    </lineage>
</organism>